<sequence length="438" mass="48917">MRDVHGSLKYFSSVAEDMNPSDVFQIIEGHTKLMRDSIPLIASENLTSLSVRRCYVSDLGHRYAEGRVGERFYEGCKYVDQIESMAIELTRKIFEAEHANVQPISGVVANLAAFFALTNVGDTIMSISVPCGGHISHDRVSAAGLRGLRVIHYPFNSEEMSVDVDETRKVAERERPKLFILGSSLILFRQPVKEIREIADEIGAYVMYDASHVLGLIAGKAFQNPLKEGADVMTGSTHKTFFGPQRAIIASRKELAEKVDRAVFPGVVSNHHLNTLAGYVVAAMEMLEFGEDYAKQVVRNAKALAEELYSLGYKVLGEKRGFTETHQVAVDVREFGGGERVAKVLENAGIILNKNLLPWDSLEKTANPSGIRIGVQEVTRIGMKEEEMRAIAEIMDAAIKEKKSVDELRNEVKELKERFNVIKYSFDESEAYHFPDLR</sequence>
<organism>
    <name type="scientific">Archaeoglobus fulgidus (strain ATCC 49558 / DSM 4304 / JCM 9628 / NBRC 100126 / VC-16)</name>
    <dbReference type="NCBI Taxonomy" id="224325"/>
    <lineage>
        <taxon>Archaea</taxon>
        <taxon>Methanobacteriati</taxon>
        <taxon>Methanobacteriota</taxon>
        <taxon>Archaeoglobi</taxon>
        <taxon>Archaeoglobales</taxon>
        <taxon>Archaeoglobaceae</taxon>
        <taxon>Archaeoglobus</taxon>
    </lineage>
</organism>
<feature type="chain" id="PRO_0000113709" description="Serine hydroxymethyltransferase">
    <location>
        <begin position="1"/>
        <end position="438"/>
    </location>
</feature>
<feature type="binding site" evidence="1">
    <location>
        <begin position="133"/>
        <end position="135"/>
    </location>
    <ligand>
        <name>(6S)-5,6,7,8-tetrahydrofolate</name>
        <dbReference type="ChEBI" id="CHEBI:57453"/>
    </ligand>
</feature>
<feature type="site" description="Plays an important role in substrate specificity" evidence="1">
    <location>
        <position position="238"/>
    </location>
</feature>
<feature type="modified residue" description="N6-(pyridoxal phosphate)lysine" evidence="1">
    <location>
        <position position="239"/>
    </location>
</feature>
<reference key="1">
    <citation type="journal article" date="1997" name="Nature">
        <title>The complete genome sequence of the hyperthermophilic, sulphate-reducing archaeon Archaeoglobus fulgidus.</title>
        <authorList>
            <person name="Klenk H.-P."/>
            <person name="Clayton R.A."/>
            <person name="Tomb J.-F."/>
            <person name="White O."/>
            <person name="Nelson K.E."/>
            <person name="Ketchum K.A."/>
            <person name="Dodson R.J."/>
            <person name="Gwinn M.L."/>
            <person name="Hickey E.K."/>
            <person name="Peterson J.D."/>
            <person name="Richardson D.L."/>
            <person name="Kerlavage A.R."/>
            <person name="Graham D.E."/>
            <person name="Kyrpides N.C."/>
            <person name="Fleischmann R.D."/>
            <person name="Quackenbush J."/>
            <person name="Lee N.H."/>
            <person name="Sutton G.G."/>
            <person name="Gill S.R."/>
            <person name="Kirkness E.F."/>
            <person name="Dougherty B.A."/>
            <person name="McKenney K."/>
            <person name="Adams M.D."/>
            <person name="Loftus B.J."/>
            <person name="Peterson S.N."/>
            <person name="Reich C.I."/>
            <person name="McNeil L.K."/>
            <person name="Badger J.H."/>
            <person name="Glodek A."/>
            <person name="Zhou L."/>
            <person name="Overbeek R."/>
            <person name="Gocayne J.D."/>
            <person name="Weidman J.F."/>
            <person name="McDonald L.A."/>
            <person name="Utterback T.R."/>
            <person name="Cotton M.D."/>
            <person name="Spriggs T."/>
            <person name="Artiach P."/>
            <person name="Kaine B.P."/>
            <person name="Sykes S.M."/>
            <person name="Sadow P.W."/>
            <person name="D'Andrea K.P."/>
            <person name="Bowman C."/>
            <person name="Fujii C."/>
            <person name="Garland S.A."/>
            <person name="Mason T.M."/>
            <person name="Olsen G.J."/>
            <person name="Fraser C.M."/>
            <person name="Smith H.O."/>
            <person name="Woese C.R."/>
            <person name="Venter J.C."/>
        </authorList>
    </citation>
    <scope>NUCLEOTIDE SEQUENCE [LARGE SCALE GENOMIC DNA]</scope>
    <source>
        <strain>ATCC 49558 / DSM 4304 / JCM 9628 / NBRC 100126 / VC-16</strain>
    </source>
</reference>
<gene>
    <name evidence="1" type="primary">glyA</name>
    <name type="ordered locus">AF_0852</name>
</gene>
<evidence type="ECO:0000255" key="1">
    <source>
        <dbReference type="HAMAP-Rule" id="MF_00051"/>
    </source>
</evidence>
<name>GLYA_ARCFU</name>
<comment type="function">
    <text evidence="1">Catalyzes the reversible interconversion of serine and glycine with tetrahydromethanopterin (H4MPT) serving as the one-carbon carrier. Also exhibits a pteridine-independent aldolase activity toward beta-hydroxyamino acids, producing glycine and aldehydes, via a retro-aldol mechanism.</text>
</comment>
<comment type="catalytic activity">
    <reaction evidence="1">
        <text>5,10-methylenetetrahydromethanopterin + glycine + H2O = 5,6,7,8-tetrahydromethanopterin + L-serine</text>
        <dbReference type="Rhea" id="RHEA:47104"/>
        <dbReference type="ChEBI" id="CHEBI:15377"/>
        <dbReference type="ChEBI" id="CHEBI:33384"/>
        <dbReference type="ChEBI" id="CHEBI:57305"/>
        <dbReference type="ChEBI" id="CHEBI:57818"/>
        <dbReference type="ChEBI" id="CHEBI:58103"/>
    </reaction>
</comment>
<comment type="cofactor">
    <cofactor evidence="1">
        <name>pyridoxal 5'-phosphate</name>
        <dbReference type="ChEBI" id="CHEBI:597326"/>
    </cofactor>
</comment>
<comment type="pathway">
    <text evidence="1">Amino-acid biosynthesis; glycine biosynthesis; glycine from L-serine: step 1/1.</text>
</comment>
<comment type="subunit">
    <text evidence="1">Homodimer.</text>
</comment>
<comment type="subcellular location">
    <subcellularLocation>
        <location evidence="1">Cytoplasm</location>
    </subcellularLocation>
</comment>
<comment type="similarity">
    <text evidence="1">Belongs to the SHMT family.</text>
</comment>
<accession>O29406</accession>
<proteinExistence type="inferred from homology"/>
<protein>
    <recommendedName>
        <fullName evidence="1">Serine hydroxymethyltransferase</fullName>
        <shortName evidence="1">SHMT</shortName>
        <shortName evidence="1">Serine methylase</shortName>
        <ecNumber evidence="1">2.1.2.-</ecNumber>
    </recommendedName>
</protein>
<keyword id="KW-0028">Amino-acid biosynthesis</keyword>
<keyword id="KW-0963">Cytoplasm</keyword>
<keyword id="KW-0554">One-carbon metabolism</keyword>
<keyword id="KW-0663">Pyridoxal phosphate</keyword>
<keyword id="KW-1185">Reference proteome</keyword>
<keyword id="KW-0808">Transferase</keyword>
<dbReference type="EC" id="2.1.2.-" evidence="1"/>
<dbReference type="EMBL" id="AE000782">
    <property type="protein sequence ID" value="AAB90386.1"/>
    <property type="molecule type" value="Genomic_DNA"/>
</dbReference>
<dbReference type="PIR" id="D69356">
    <property type="entry name" value="D69356"/>
</dbReference>
<dbReference type="SMR" id="O29406"/>
<dbReference type="STRING" id="224325.AF_0852"/>
<dbReference type="PaxDb" id="224325-AF_0852"/>
<dbReference type="EnsemblBacteria" id="AAB90386">
    <property type="protein sequence ID" value="AAB90386"/>
    <property type="gene ID" value="AF_0852"/>
</dbReference>
<dbReference type="KEGG" id="afu:AF_0852"/>
<dbReference type="eggNOG" id="arCOG00070">
    <property type="taxonomic scope" value="Archaea"/>
</dbReference>
<dbReference type="HOGENOM" id="CLU_022477_2_1_2"/>
<dbReference type="PhylomeDB" id="O29406"/>
<dbReference type="UniPathway" id="UPA00288">
    <property type="reaction ID" value="UER01023"/>
</dbReference>
<dbReference type="Proteomes" id="UP000002199">
    <property type="component" value="Chromosome"/>
</dbReference>
<dbReference type="GO" id="GO:0005737">
    <property type="term" value="C:cytoplasm"/>
    <property type="evidence" value="ECO:0007669"/>
    <property type="project" value="UniProtKB-SubCell"/>
</dbReference>
<dbReference type="GO" id="GO:0004372">
    <property type="term" value="F:glycine hydroxymethyltransferase activity"/>
    <property type="evidence" value="ECO:0007669"/>
    <property type="project" value="UniProtKB-UniRule"/>
</dbReference>
<dbReference type="GO" id="GO:0030170">
    <property type="term" value="F:pyridoxal phosphate binding"/>
    <property type="evidence" value="ECO:0007669"/>
    <property type="project" value="UniProtKB-UniRule"/>
</dbReference>
<dbReference type="GO" id="GO:0019264">
    <property type="term" value="P:glycine biosynthetic process from serine"/>
    <property type="evidence" value="ECO:0007669"/>
    <property type="project" value="UniProtKB-UniRule"/>
</dbReference>
<dbReference type="GO" id="GO:0035999">
    <property type="term" value="P:tetrahydrofolate interconversion"/>
    <property type="evidence" value="ECO:0007669"/>
    <property type="project" value="InterPro"/>
</dbReference>
<dbReference type="CDD" id="cd00378">
    <property type="entry name" value="SHMT"/>
    <property type="match status" value="1"/>
</dbReference>
<dbReference type="FunFam" id="3.40.640.10:FF:000101">
    <property type="entry name" value="Serine hydroxymethyltransferase"/>
    <property type="match status" value="1"/>
</dbReference>
<dbReference type="FunFam" id="3.90.1150.10:FF:000114">
    <property type="entry name" value="Serine hydroxymethyltransferase"/>
    <property type="match status" value="1"/>
</dbReference>
<dbReference type="Gene3D" id="3.90.1150.10">
    <property type="entry name" value="Aspartate Aminotransferase, domain 1"/>
    <property type="match status" value="1"/>
</dbReference>
<dbReference type="Gene3D" id="3.40.640.10">
    <property type="entry name" value="Type I PLP-dependent aspartate aminotransferase-like (Major domain)"/>
    <property type="match status" value="1"/>
</dbReference>
<dbReference type="HAMAP" id="MF_00051">
    <property type="entry name" value="SHMT"/>
    <property type="match status" value="1"/>
</dbReference>
<dbReference type="InterPro" id="IPR015424">
    <property type="entry name" value="PyrdxlP-dep_Trfase"/>
</dbReference>
<dbReference type="InterPro" id="IPR015421">
    <property type="entry name" value="PyrdxlP-dep_Trfase_major"/>
</dbReference>
<dbReference type="InterPro" id="IPR015422">
    <property type="entry name" value="PyrdxlP-dep_Trfase_small"/>
</dbReference>
<dbReference type="InterPro" id="IPR001085">
    <property type="entry name" value="Ser_HO-MeTrfase"/>
</dbReference>
<dbReference type="InterPro" id="IPR049943">
    <property type="entry name" value="Ser_HO-MeTrfase-like"/>
</dbReference>
<dbReference type="InterPro" id="IPR019798">
    <property type="entry name" value="Ser_HO-MeTrfase_PLP_BS"/>
</dbReference>
<dbReference type="InterPro" id="IPR039429">
    <property type="entry name" value="SHMT-like_dom"/>
</dbReference>
<dbReference type="NCBIfam" id="NF000586">
    <property type="entry name" value="PRK00011.1"/>
    <property type="match status" value="1"/>
</dbReference>
<dbReference type="PANTHER" id="PTHR11680">
    <property type="entry name" value="SERINE HYDROXYMETHYLTRANSFERASE"/>
    <property type="match status" value="1"/>
</dbReference>
<dbReference type="PANTHER" id="PTHR11680:SF35">
    <property type="entry name" value="SERINE HYDROXYMETHYLTRANSFERASE 1"/>
    <property type="match status" value="1"/>
</dbReference>
<dbReference type="Pfam" id="PF00464">
    <property type="entry name" value="SHMT"/>
    <property type="match status" value="1"/>
</dbReference>
<dbReference type="PIRSF" id="PIRSF000412">
    <property type="entry name" value="SHMT"/>
    <property type="match status" value="1"/>
</dbReference>
<dbReference type="SUPFAM" id="SSF53383">
    <property type="entry name" value="PLP-dependent transferases"/>
    <property type="match status" value="1"/>
</dbReference>
<dbReference type="PROSITE" id="PS00096">
    <property type="entry name" value="SHMT"/>
    <property type="match status" value="1"/>
</dbReference>